<name>RF1_STAAR</name>
<proteinExistence type="inferred from homology"/>
<reference key="1">
    <citation type="journal article" date="2004" name="Proc. Natl. Acad. Sci. U.S.A.">
        <title>Complete genomes of two clinical Staphylococcus aureus strains: evidence for the rapid evolution of virulence and drug resistance.</title>
        <authorList>
            <person name="Holden M.T.G."/>
            <person name="Feil E.J."/>
            <person name="Lindsay J.A."/>
            <person name="Peacock S.J."/>
            <person name="Day N.P.J."/>
            <person name="Enright M.C."/>
            <person name="Foster T.J."/>
            <person name="Moore C.E."/>
            <person name="Hurst L."/>
            <person name="Atkin R."/>
            <person name="Barron A."/>
            <person name="Bason N."/>
            <person name="Bentley S.D."/>
            <person name="Chillingworth C."/>
            <person name="Chillingworth T."/>
            <person name="Churcher C."/>
            <person name="Clark L."/>
            <person name="Corton C."/>
            <person name="Cronin A."/>
            <person name="Doggett J."/>
            <person name="Dowd L."/>
            <person name="Feltwell T."/>
            <person name="Hance Z."/>
            <person name="Harris B."/>
            <person name="Hauser H."/>
            <person name="Holroyd S."/>
            <person name="Jagels K."/>
            <person name="James K.D."/>
            <person name="Lennard N."/>
            <person name="Line A."/>
            <person name="Mayes R."/>
            <person name="Moule S."/>
            <person name="Mungall K."/>
            <person name="Ormond D."/>
            <person name="Quail M.A."/>
            <person name="Rabbinowitsch E."/>
            <person name="Rutherford K.M."/>
            <person name="Sanders M."/>
            <person name="Sharp S."/>
            <person name="Simmonds M."/>
            <person name="Stevens K."/>
            <person name="Whitehead S."/>
            <person name="Barrell B.G."/>
            <person name="Spratt B.G."/>
            <person name="Parkhill J."/>
        </authorList>
    </citation>
    <scope>NUCLEOTIDE SEQUENCE [LARGE SCALE GENOMIC DNA]</scope>
    <source>
        <strain>MRSA252</strain>
    </source>
</reference>
<protein>
    <recommendedName>
        <fullName evidence="1">Peptide chain release factor 1</fullName>
        <shortName evidence="1">RF-1</shortName>
    </recommendedName>
</protein>
<gene>
    <name evidence="1" type="primary">prfA</name>
    <name type="ordered locus">SAR2206</name>
</gene>
<keyword id="KW-0963">Cytoplasm</keyword>
<keyword id="KW-0488">Methylation</keyword>
<keyword id="KW-0648">Protein biosynthesis</keyword>
<comment type="function">
    <text evidence="1">Peptide chain release factor 1 directs the termination of translation in response to the peptide chain termination codons UAG and UAA.</text>
</comment>
<comment type="subcellular location">
    <subcellularLocation>
        <location evidence="1">Cytoplasm</location>
    </subcellularLocation>
</comment>
<comment type="PTM">
    <text evidence="1">Methylated by PrmC. Methylation increases the termination efficiency of RF1.</text>
</comment>
<comment type="similarity">
    <text evidence="1">Belongs to the prokaryotic/mitochondrial release factor family.</text>
</comment>
<feature type="chain" id="PRO_0000177740" description="Peptide chain release factor 1">
    <location>
        <begin position="1"/>
        <end position="358"/>
    </location>
</feature>
<feature type="modified residue" description="N5-methylglutamine" evidence="1">
    <location>
        <position position="233"/>
    </location>
</feature>
<organism>
    <name type="scientific">Staphylococcus aureus (strain MRSA252)</name>
    <dbReference type="NCBI Taxonomy" id="282458"/>
    <lineage>
        <taxon>Bacteria</taxon>
        <taxon>Bacillati</taxon>
        <taxon>Bacillota</taxon>
        <taxon>Bacilli</taxon>
        <taxon>Bacillales</taxon>
        <taxon>Staphylococcaceae</taxon>
        <taxon>Staphylococcus</taxon>
    </lineage>
</organism>
<dbReference type="EMBL" id="BX571856">
    <property type="protein sequence ID" value="CAG41187.1"/>
    <property type="molecule type" value="Genomic_DNA"/>
</dbReference>
<dbReference type="RefSeq" id="WP_000460244.1">
    <property type="nucleotide sequence ID" value="NC_002952.2"/>
</dbReference>
<dbReference type="SMR" id="Q6GEV7"/>
<dbReference type="KEGG" id="sar:SAR2206"/>
<dbReference type="HOGENOM" id="CLU_036856_0_1_9"/>
<dbReference type="Proteomes" id="UP000000596">
    <property type="component" value="Chromosome"/>
</dbReference>
<dbReference type="GO" id="GO:0005737">
    <property type="term" value="C:cytoplasm"/>
    <property type="evidence" value="ECO:0007669"/>
    <property type="project" value="UniProtKB-SubCell"/>
</dbReference>
<dbReference type="GO" id="GO:0016149">
    <property type="term" value="F:translation release factor activity, codon specific"/>
    <property type="evidence" value="ECO:0007669"/>
    <property type="project" value="UniProtKB-UniRule"/>
</dbReference>
<dbReference type="FunFam" id="3.30.160.20:FF:000004">
    <property type="entry name" value="Peptide chain release factor 1"/>
    <property type="match status" value="1"/>
</dbReference>
<dbReference type="FunFam" id="3.30.70.1660:FF:000002">
    <property type="entry name" value="Peptide chain release factor 1"/>
    <property type="match status" value="1"/>
</dbReference>
<dbReference type="FunFam" id="3.30.70.1660:FF:000004">
    <property type="entry name" value="Peptide chain release factor 1"/>
    <property type="match status" value="1"/>
</dbReference>
<dbReference type="Gene3D" id="3.30.160.20">
    <property type="match status" value="1"/>
</dbReference>
<dbReference type="Gene3D" id="3.30.70.1660">
    <property type="match status" value="1"/>
</dbReference>
<dbReference type="Gene3D" id="6.10.140.1950">
    <property type="match status" value="1"/>
</dbReference>
<dbReference type="HAMAP" id="MF_00093">
    <property type="entry name" value="Rel_fac_1"/>
    <property type="match status" value="1"/>
</dbReference>
<dbReference type="InterPro" id="IPR005139">
    <property type="entry name" value="PCRF"/>
</dbReference>
<dbReference type="InterPro" id="IPR000352">
    <property type="entry name" value="Pep_chain_release_fac_I"/>
</dbReference>
<dbReference type="InterPro" id="IPR045853">
    <property type="entry name" value="Pep_chain_release_fac_I_sf"/>
</dbReference>
<dbReference type="InterPro" id="IPR050057">
    <property type="entry name" value="Prokaryotic/Mito_RF"/>
</dbReference>
<dbReference type="InterPro" id="IPR004373">
    <property type="entry name" value="RF-1"/>
</dbReference>
<dbReference type="NCBIfam" id="TIGR00019">
    <property type="entry name" value="prfA"/>
    <property type="match status" value="1"/>
</dbReference>
<dbReference type="NCBIfam" id="NF001859">
    <property type="entry name" value="PRK00591.1"/>
    <property type="match status" value="1"/>
</dbReference>
<dbReference type="PANTHER" id="PTHR43804">
    <property type="entry name" value="LD18447P"/>
    <property type="match status" value="1"/>
</dbReference>
<dbReference type="PANTHER" id="PTHR43804:SF7">
    <property type="entry name" value="LD18447P"/>
    <property type="match status" value="1"/>
</dbReference>
<dbReference type="Pfam" id="PF03462">
    <property type="entry name" value="PCRF"/>
    <property type="match status" value="1"/>
</dbReference>
<dbReference type="Pfam" id="PF00472">
    <property type="entry name" value="RF-1"/>
    <property type="match status" value="1"/>
</dbReference>
<dbReference type="SMART" id="SM00937">
    <property type="entry name" value="PCRF"/>
    <property type="match status" value="1"/>
</dbReference>
<dbReference type="SUPFAM" id="SSF75620">
    <property type="entry name" value="Release factor"/>
    <property type="match status" value="1"/>
</dbReference>
<dbReference type="PROSITE" id="PS00745">
    <property type="entry name" value="RF_PROK_I"/>
    <property type="match status" value="1"/>
</dbReference>
<evidence type="ECO:0000255" key="1">
    <source>
        <dbReference type="HAMAP-Rule" id="MF_00093"/>
    </source>
</evidence>
<sequence length="358" mass="40323">MFDQLDIVEERYEQLNELLSDPDVVNDSDKLRKYSKEQADLQKTVDVYRNYKAKKEELADIEEMLSETDDKEEVEMLKEESSGIKAELPNLEEELKILLIPKDPNDDKDVIVEIRAAAGGDEAAIFAGDLMRMYSKYAESQGFKTEIVEASESDHGGYKEISFSVSGNGAYSKLKFENGAHRVQRVPETESGGRIHTSTATVAVLPEVEDVEIEIRNEDLKIDTYRSSGAGGQHVNTTDSAVRITHLPTGVIATSSEKSQIQNREKAMKVLKARLYDMKVQEEQQKYASQRKSAVGTGDRSERIRTYNYPQSRVTDHRIGLTLQKLGQIMEGHLEEIIDALTLSEQTDKLKELNNGEL</sequence>
<accession>Q6GEV7</accession>